<keyword id="KW-0963">Cytoplasm</keyword>
<keyword id="KW-0251">Elongation factor</keyword>
<keyword id="KW-0342">GTP-binding</keyword>
<keyword id="KW-0547">Nucleotide-binding</keyword>
<keyword id="KW-0648">Protein biosynthesis</keyword>
<keyword id="KW-1185">Reference proteome</keyword>
<name>EFG1_BDEBA</name>
<comment type="function">
    <text evidence="1">Catalyzes the GTP-dependent ribosomal translocation step during translation elongation. During this step, the ribosome changes from the pre-translocational (PRE) to the post-translocational (POST) state as the newly formed A-site-bound peptidyl-tRNA and P-site-bound deacylated tRNA move to the P and E sites, respectively. Catalyzes the coordinated movement of the two tRNA molecules, the mRNA and conformational changes in the ribosome.</text>
</comment>
<comment type="subcellular location">
    <subcellularLocation>
        <location evidence="1">Cytoplasm</location>
    </subcellularLocation>
</comment>
<comment type="similarity">
    <text evidence="1">Belongs to the TRAFAC class translation factor GTPase superfamily. Classic translation factor GTPase family. EF-G/EF-2 subfamily.</text>
</comment>
<feature type="chain" id="PRO_0000091075" description="Elongation factor G 1">
    <location>
        <begin position="1"/>
        <end position="701"/>
    </location>
</feature>
<feature type="domain" description="tr-type G">
    <location>
        <begin position="13"/>
        <end position="288"/>
    </location>
</feature>
<feature type="binding site" evidence="1">
    <location>
        <begin position="22"/>
        <end position="29"/>
    </location>
    <ligand>
        <name>GTP</name>
        <dbReference type="ChEBI" id="CHEBI:37565"/>
    </ligand>
</feature>
<feature type="binding site" evidence="1">
    <location>
        <begin position="86"/>
        <end position="90"/>
    </location>
    <ligand>
        <name>GTP</name>
        <dbReference type="ChEBI" id="CHEBI:37565"/>
    </ligand>
</feature>
<feature type="binding site" evidence="1">
    <location>
        <begin position="140"/>
        <end position="143"/>
    </location>
    <ligand>
        <name>GTP</name>
        <dbReference type="ChEBI" id="CHEBI:37565"/>
    </ligand>
</feature>
<accession>Q6MJ13</accession>
<protein>
    <recommendedName>
        <fullName evidence="1">Elongation factor G 1</fullName>
        <shortName evidence="1">EF-G 1</shortName>
    </recommendedName>
</protein>
<sequence>MSAKDPKVVADLKYTRNIGIMAHIDAGKTTTTERILYYTGKSHKIGEVHDGDATMDWMVQEQERGITITSAATMAFWKDHRINIIDTPGHVDFTIEVERSLRVLDGAIAVFDGVNGVEPQSETVWKQADKYKVPRICFVNKMDRVGADFVMSFGTIKEKLNANPIPVQVPIGMEDTFRGVVDLLENKAYMWDQSGMGDHFEITDVPNDMKEEVNRFRTEVIEKIVEFEDELLEKYLNGEEVTVPELKRALRKGTLELKAFPVFCGAAFKNKGVQPLLDGVIDYLPSPLEVPAIVGHDPERPDKEIICKTEFDAHAAALAFKIANDPFAGTLTYIRVYSGEVKVGEQLLNPRTQKKERIQKLVKMHANSREEINSLKAGDIGAVIGLKFTGTGDTLCESSHAVVLETITFPEPVISVAVEAKSSADQEKMLAGLAKLEKEDPSCRLRTDPETGQILLSGMGELHLEILVDRLLREHKIQANVGKPQVSYRETITVAAKAEHVYEREIAGETHFAKVSLSIEPISQADGIQFISKVAVSKEFTAPMLKAAESGFREAAEVGPLASCSMLGIKGTLNSVEVRPDSSSEMAFKAAASLAFRDAVKAASVELLEPIFKLEVTCPDDFVGNIVGDLNARRGKILAMNVKQGGGQVISAEAPLASLFGYATDVRSLSQGRASFSMEFLEYAIVPAKVKTDILHKMGRY</sequence>
<organism>
    <name type="scientific">Bdellovibrio bacteriovorus (strain ATCC 15356 / DSM 50701 / NCIMB 9529 / HD100)</name>
    <dbReference type="NCBI Taxonomy" id="264462"/>
    <lineage>
        <taxon>Bacteria</taxon>
        <taxon>Pseudomonadati</taxon>
        <taxon>Bdellovibrionota</taxon>
        <taxon>Bdellovibrionia</taxon>
        <taxon>Bdellovibrionales</taxon>
        <taxon>Pseudobdellovibrionaceae</taxon>
        <taxon>Bdellovibrio</taxon>
    </lineage>
</organism>
<dbReference type="EMBL" id="BX842654">
    <property type="protein sequence ID" value="CAE80750.1"/>
    <property type="molecule type" value="Genomic_DNA"/>
</dbReference>
<dbReference type="RefSeq" id="WP_011165354.1">
    <property type="nucleotide sequence ID" value="NC_005363.1"/>
</dbReference>
<dbReference type="SMR" id="Q6MJ13"/>
<dbReference type="STRING" id="264462.Bd2979"/>
<dbReference type="GeneID" id="93013841"/>
<dbReference type="KEGG" id="bba:Bd2979"/>
<dbReference type="eggNOG" id="COG0480">
    <property type="taxonomic scope" value="Bacteria"/>
</dbReference>
<dbReference type="HOGENOM" id="CLU_002794_4_1_7"/>
<dbReference type="Proteomes" id="UP000008080">
    <property type="component" value="Chromosome"/>
</dbReference>
<dbReference type="GO" id="GO:0005737">
    <property type="term" value="C:cytoplasm"/>
    <property type="evidence" value="ECO:0007669"/>
    <property type="project" value="UniProtKB-SubCell"/>
</dbReference>
<dbReference type="GO" id="GO:0005525">
    <property type="term" value="F:GTP binding"/>
    <property type="evidence" value="ECO:0007669"/>
    <property type="project" value="UniProtKB-UniRule"/>
</dbReference>
<dbReference type="GO" id="GO:0003924">
    <property type="term" value="F:GTPase activity"/>
    <property type="evidence" value="ECO:0007669"/>
    <property type="project" value="InterPro"/>
</dbReference>
<dbReference type="GO" id="GO:0003746">
    <property type="term" value="F:translation elongation factor activity"/>
    <property type="evidence" value="ECO:0007669"/>
    <property type="project" value="UniProtKB-UniRule"/>
</dbReference>
<dbReference type="GO" id="GO:0032790">
    <property type="term" value="P:ribosome disassembly"/>
    <property type="evidence" value="ECO:0007669"/>
    <property type="project" value="TreeGrafter"/>
</dbReference>
<dbReference type="CDD" id="cd01886">
    <property type="entry name" value="EF-G"/>
    <property type="match status" value="1"/>
</dbReference>
<dbReference type="CDD" id="cd16262">
    <property type="entry name" value="EFG_III"/>
    <property type="match status" value="1"/>
</dbReference>
<dbReference type="CDD" id="cd03713">
    <property type="entry name" value="EFG_mtEFG_C"/>
    <property type="match status" value="1"/>
</dbReference>
<dbReference type="CDD" id="cd04088">
    <property type="entry name" value="EFG_mtEFG_II"/>
    <property type="match status" value="1"/>
</dbReference>
<dbReference type="FunFam" id="2.40.30.10:FF:000006">
    <property type="entry name" value="Elongation factor G"/>
    <property type="match status" value="1"/>
</dbReference>
<dbReference type="FunFam" id="3.30.70.240:FF:000001">
    <property type="entry name" value="Elongation factor G"/>
    <property type="match status" value="1"/>
</dbReference>
<dbReference type="FunFam" id="3.30.70.870:FF:000001">
    <property type="entry name" value="Elongation factor G"/>
    <property type="match status" value="1"/>
</dbReference>
<dbReference type="FunFam" id="3.40.50.300:FF:000029">
    <property type="entry name" value="Elongation factor G"/>
    <property type="match status" value="1"/>
</dbReference>
<dbReference type="Gene3D" id="3.30.230.10">
    <property type="match status" value="1"/>
</dbReference>
<dbReference type="Gene3D" id="3.30.70.240">
    <property type="match status" value="1"/>
</dbReference>
<dbReference type="Gene3D" id="3.30.70.870">
    <property type="entry name" value="Elongation Factor G (Translational Gtpase), domain 3"/>
    <property type="match status" value="1"/>
</dbReference>
<dbReference type="Gene3D" id="3.40.50.300">
    <property type="entry name" value="P-loop containing nucleotide triphosphate hydrolases"/>
    <property type="match status" value="1"/>
</dbReference>
<dbReference type="Gene3D" id="2.40.30.10">
    <property type="entry name" value="Translation factors"/>
    <property type="match status" value="1"/>
</dbReference>
<dbReference type="HAMAP" id="MF_00054_B">
    <property type="entry name" value="EF_G_EF_2_B"/>
    <property type="match status" value="1"/>
</dbReference>
<dbReference type="InterPro" id="IPR041095">
    <property type="entry name" value="EFG_II"/>
</dbReference>
<dbReference type="InterPro" id="IPR009022">
    <property type="entry name" value="EFG_III"/>
</dbReference>
<dbReference type="InterPro" id="IPR035647">
    <property type="entry name" value="EFG_III/V"/>
</dbReference>
<dbReference type="InterPro" id="IPR035649">
    <property type="entry name" value="EFG_V"/>
</dbReference>
<dbReference type="InterPro" id="IPR000640">
    <property type="entry name" value="EFG_V-like"/>
</dbReference>
<dbReference type="InterPro" id="IPR004161">
    <property type="entry name" value="EFTu-like_2"/>
</dbReference>
<dbReference type="InterPro" id="IPR031157">
    <property type="entry name" value="G_TR_CS"/>
</dbReference>
<dbReference type="InterPro" id="IPR027417">
    <property type="entry name" value="P-loop_NTPase"/>
</dbReference>
<dbReference type="InterPro" id="IPR020568">
    <property type="entry name" value="Ribosomal_Su5_D2-typ_SF"/>
</dbReference>
<dbReference type="InterPro" id="IPR014721">
    <property type="entry name" value="Ribsml_uS5_D2-typ_fold_subgr"/>
</dbReference>
<dbReference type="InterPro" id="IPR005225">
    <property type="entry name" value="Small_GTP-bd"/>
</dbReference>
<dbReference type="InterPro" id="IPR000795">
    <property type="entry name" value="T_Tr_GTP-bd_dom"/>
</dbReference>
<dbReference type="InterPro" id="IPR009000">
    <property type="entry name" value="Transl_B-barrel_sf"/>
</dbReference>
<dbReference type="InterPro" id="IPR004540">
    <property type="entry name" value="Transl_elong_EFG/EF2"/>
</dbReference>
<dbReference type="InterPro" id="IPR005517">
    <property type="entry name" value="Transl_elong_EFG/EF2_IV"/>
</dbReference>
<dbReference type="NCBIfam" id="TIGR00484">
    <property type="entry name" value="EF-G"/>
    <property type="match status" value="1"/>
</dbReference>
<dbReference type="NCBIfam" id="NF009381">
    <property type="entry name" value="PRK12740.1-5"/>
    <property type="match status" value="1"/>
</dbReference>
<dbReference type="NCBIfam" id="TIGR00231">
    <property type="entry name" value="small_GTP"/>
    <property type="match status" value="1"/>
</dbReference>
<dbReference type="PANTHER" id="PTHR43261:SF1">
    <property type="entry name" value="RIBOSOME-RELEASING FACTOR 2, MITOCHONDRIAL"/>
    <property type="match status" value="1"/>
</dbReference>
<dbReference type="PANTHER" id="PTHR43261">
    <property type="entry name" value="TRANSLATION ELONGATION FACTOR G-RELATED"/>
    <property type="match status" value="1"/>
</dbReference>
<dbReference type="Pfam" id="PF00679">
    <property type="entry name" value="EFG_C"/>
    <property type="match status" value="1"/>
</dbReference>
<dbReference type="Pfam" id="PF14492">
    <property type="entry name" value="EFG_III"/>
    <property type="match status" value="1"/>
</dbReference>
<dbReference type="Pfam" id="PF03764">
    <property type="entry name" value="EFG_IV"/>
    <property type="match status" value="1"/>
</dbReference>
<dbReference type="Pfam" id="PF00009">
    <property type="entry name" value="GTP_EFTU"/>
    <property type="match status" value="1"/>
</dbReference>
<dbReference type="Pfam" id="PF03144">
    <property type="entry name" value="GTP_EFTU_D2"/>
    <property type="match status" value="1"/>
</dbReference>
<dbReference type="PRINTS" id="PR00315">
    <property type="entry name" value="ELONGATNFCT"/>
</dbReference>
<dbReference type="SMART" id="SM00838">
    <property type="entry name" value="EFG_C"/>
    <property type="match status" value="1"/>
</dbReference>
<dbReference type="SMART" id="SM00889">
    <property type="entry name" value="EFG_IV"/>
    <property type="match status" value="1"/>
</dbReference>
<dbReference type="SUPFAM" id="SSF54980">
    <property type="entry name" value="EF-G C-terminal domain-like"/>
    <property type="match status" value="2"/>
</dbReference>
<dbReference type="SUPFAM" id="SSF52540">
    <property type="entry name" value="P-loop containing nucleoside triphosphate hydrolases"/>
    <property type="match status" value="1"/>
</dbReference>
<dbReference type="SUPFAM" id="SSF54211">
    <property type="entry name" value="Ribosomal protein S5 domain 2-like"/>
    <property type="match status" value="1"/>
</dbReference>
<dbReference type="SUPFAM" id="SSF50447">
    <property type="entry name" value="Translation proteins"/>
    <property type="match status" value="1"/>
</dbReference>
<dbReference type="PROSITE" id="PS00301">
    <property type="entry name" value="G_TR_1"/>
    <property type="match status" value="1"/>
</dbReference>
<dbReference type="PROSITE" id="PS51722">
    <property type="entry name" value="G_TR_2"/>
    <property type="match status" value="1"/>
</dbReference>
<proteinExistence type="inferred from homology"/>
<evidence type="ECO:0000255" key="1">
    <source>
        <dbReference type="HAMAP-Rule" id="MF_00054"/>
    </source>
</evidence>
<gene>
    <name evidence="1" type="primary">fusA1</name>
    <name type="ordered locus">Bd2979</name>
</gene>
<reference key="1">
    <citation type="journal article" date="2004" name="Science">
        <title>A predator unmasked: life cycle of Bdellovibrio bacteriovorus from a genomic perspective.</title>
        <authorList>
            <person name="Rendulic S."/>
            <person name="Jagtap P."/>
            <person name="Rosinus A."/>
            <person name="Eppinger M."/>
            <person name="Baar C."/>
            <person name="Lanz C."/>
            <person name="Keller H."/>
            <person name="Lambert C."/>
            <person name="Evans K.J."/>
            <person name="Goesmann A."/>
            <person name="Meyer F."/>
            <person name="Sockett R.E."/>
            <person name="Schuster S.C."/>
        </authorList>
    </citation>
    <scope>NUCLEOTIDE SEQUENCE [LARGE SCALE GENOMIC DNA]</scope>
    <source>
        <strain>ATCC 15356 / DSM 50701 / NCIMB 9529 / HD100</strain>
    </source>
</reference>